<evidence type="ECO:0000250" key="1">
    <source>
        <dbReference type="UniProtKB" id="P00790"/>
    </source>
</evidence>
<evidence type="ECO:0000255" key="2"/>
<evidence type="ECO:0000255" key="3">
    <source>
        <dbReference type="PROSITE-ProRule" id="PRU01103"/>
    </source>
</evidence>
<evidence type="ECO:0000255" key="4">
    <source>
        <dbReference type="PROSITE-ProRule" id="PRU10094"/>
    </source>
</evidence>
<evidence type="ECO:0000269" key="5">
    <source>
    </source>
</evidence>
<evidence type="ECO:0000303" key="6">
    <source>
    </source>
</evidence>
<evidence type="ECO:0000305" key="7"/>
<evidence type="ECO:0000312" key="8">
    <source>
        <dbReference type="EMBL" id="AAC17105.1"/>
    </source>
</evidence>
<comment type="function">
    <text evidence="5">Possesses acidic protease activity. Hydrolyzes casein and azoalbumin in vitro.</text>
</comment>
<comment type="activity regulation">
    <text evidence="5">Inhibited by pepstatin A.</text>
</comment>
<comment type="biophysicochemical properties">
    <phDependence>
        <text evidence="5">Optimum pH is 4-6.</text>
    </phDependence>
    <temperatureDependence>
        <text evidence="5">Optimum temperature is approximately 40 degrees Celsius.</text>
    </temperatureDependence>
</comment>
<comment type="subcellular location">
    <subcellularLocation>
        <location evidence="5">Secreted</location>
    </subcellularLocation>
</comment>
<comment type="similarity">
    <text evidence="2">Belongs to the peptidase A1 family.</text>
</comment>
<name>ASPR1_PHARH</name>
<accession>O60020</accession>
<reference evidence="7 8" key="1">
    <citation type="journal article" date="1999" name="Appl. Microbiol. Biotechnol.">
        <title>Cloning and characterization of an endo-beta-1,3(4)glucanase and an aspartic protease from Phaffia rhodozyma CBS 6938.</title>
        <authorList>
            <person name="Bang M.L."/>
            <person name="Villadsen I."/>
            <person name="Sandal T."/>
        </authorList>
    </citation>
    <scope>NUCLEOTIDE SEQUENCE [MRNA]</scope>
    <scope>PROTEIN SEQUENCE OF 82-92</scope>
    <scope>FUNCTION</scope>
    <scope>ACTIVITY REGULATION</scope>
    <scope>BIOPHYSICOCHEMICAL PROPERTIES</scope>
    <scope>SUBCELLULAR LOCATION</scope>
    <source>
        <strain evidence="5">ATCC 96594 / BCRC 22365 / CBS 6938 / JCM 9684 / VKM Y-2793</strain>
    </source>
</reference>
<proteinExistence type="evidence at protein level"/>
<protein>
    <recommendedName>
        <fullName evidence="6 8">Aspartic protease</fullName>
        <ecNumber>3.4.23.-</ecNumber>
    </recommendedName>
</protein>
<keyword id="KW-0064">Aspartyl protease</keyword>
<keyword id="KW-0165">Cleavage on pair of basic residues</keyword>
<keyword id="KW-0903">Direct protein sequencing</keyword>
<keyword id="KW-1015">Disulfide bond</keyword>
<keyword id="KW-0378">Hydrolase</keyword>
<keyword id="KW-0645">Protease</keyword>
<keyword id="KW-0964">Secreted</keyword>
<keyword id="KW-0732">Signal</keyword>
<keyword id="KW-0865">Zymogen</keyword>
<organism>
    <name type="scientific">Phaffia rhodozyma</name>
    <name type="common">Yeast</name>
    <name type="synonym">Xanthophyllomyces dendrorhous</name>
    <dbReference type="NCBI Taxonomy" id="264483"/>
    <lineage>
        <taxon>Eukaryota</taxon>
        <taxon>Fungi</taxon>
        <taxon>Dikarya</taxon>
        <taxon>Basidiomycota</taxon>
        <taxon>Agaricomycotina</taxon>
        <taxon>Tremellomycetes</taxon>
        <taxon>Cystofilobasidiales</taxon>
        <taxon>Mrakiaceae</taxon>
        <taxon>Phaffia</taxon>
    </lineage>
</organism>
<dbReference type="EC" id="3.4.23.-"/>
<dbReference type="EMBL" id="AF064871">
    <property type="protein sequence ID" value="AAC17105.1"/>
    <property type="molecule type" value="mRNA"/>
</dbReference>
<dbReference type="SMR" id="O60020"/>
<dbReference type="GO" id="GO:0005576">
    <property type="term" value="C:extracellular region"/>
    <property type="evidence" value="ECO:0000314"/>
    <property type="project" value="UniProtKB"/>
</dbReference>
<dbReference type="GO" id="GO:0004190">
    <property type="term" value="F:aspartic-type endopeptidase activity"/>
    <property type="evidence" value="ECO:0000314"/>
    <property type="project" value="UniProtKB"/>
</dbReference>
<dbReference type="GO" id="GO:0006508">
    <property type="term" value="P:proteolysis"/>
    <property type="evidence" value="ECO:0000314"/>
    <property type="project" value="UniProtKB"/>
</dbReference>
<dbReference type="CDD" id="cd05471">
    <property type="entry name" value="pepsin_like"/>
    <property type="match status" value="1"/>
</dbReference>
<dbReference type="FunFam" id="2.40.70.10:FF:000115">
    <property type="entry name" value="Lysosomal aspartic protease"/>
    <property type="match status" value="1"/>
</dbReference>
<dbReference type="Gene3D" id="2.40.70.10">
    <property type="entry name" value="Acid Proteases"/>
    <property type="match status" value="2"/>
</dbReference>
<dbReference type="InterPro" id="IPR001461">
    <property type="entry name" value="Aspartic_peptidase_A1"/>
</dbReference>
<dbReference type="InterPro" id="IPR001969">
    <property type="entry name" value="Aspartic_peptidase_AS"/>
</dbReference>
<dbReference type="InterPro" id="IPR034164">
    <property type="entry name" value="Pepsin-like_dom"/>
</dbReference>
<dbReference type="InterPro" id="IPR033121">
    <property type="entry name" value="PEPTIDASE_A1"/>
</dbReference>
<dbReference type="InterPro" id="IPR021109">
    <property type="entry name" value="Peptidase_aspartic_dom_sf"/>
</dbReference>
<dbReference type="PANTHER" id="PTHR47966">
    <property type="entry name" value="BETA-SITE APP-CLEAVING ENZYME, ISOFORM A-RELATED"/>
    <property type="match status" value="1"/>
</dbReference>
<dbReference type="PANTHER" id="PTHR47966:SF57">
    <property type="entry name" value="PEPTIDASE A1 DOMAIN-CONTAINING PROTEIN"/>
    <property type="match status" value="1"/>
</dbReference>
<dbReference type="Pfam" id="PF00026">
    <property type="entry name" value="Asp"/>
    <property type="match status" value="1"/>
</dbReference>
<dbReference type="PRINTS" id="PR00792">
    <property type="entry name" value="PEPSIN"/>
</dbReference>
<dbReference type="SUPFAM" id="SSF50630">
    <property type="entry name" value="Acid proteases"/>
    <property type="match status" value="1"/>
</dbReference>
<dbReference type="PROSITE" id="PS00141">
    <property type="entry name" value="ASP_PROTEASE"/>
    <property type="match status" value="1"/>
</dbReference>
<dbReference type="PROSITE" id="PS51767">
    <property type="entry name" value="PEPTIDASE_A1"/>
    <property type="match status" value="1"/>
</dbReference>
<feature type="signal peptide" evidence="2">
    <location>
        <begin position="1"/>
        <end position="21"/>
    </location>
</feature>
<feature type="propeptide" id="PRO_0000390379" description="Removed in mature form" evidence="5">
    <location>
        <begin position="22"/>
        <end position="81"/>
    </location>
</feature>
<feature type="chain" id="PRO_0000390380" description="Aspartic protease" evidence="5">
    <location>
        <begin position="82"/>
        <end position="405"/>
    </location>
</feature>
<feature type="domain" description="Peptidase A1" evidence="3">
    <location>
        <begin position="97"/>
        <end position="402"/>
    </location>
</feature>
<feature type="active site" evidence="1 4">
    <location>
        <position position="113"/>
    </location>
</feature>
<feature type="active site" evidence="1 4">
    <location>
        <position position="290"/>
    </location>
</feature>
<feature type="disulfide bond" evidence="1">
    <location>
        <begin position="126"/>
        <end position="131"/>
    </location>
</feature>
<feature type="disulfide bond" evidence="1">
    <location>
        <begin position="332"/>
        <end position="366"/>
    </location>
</feature>
<gene>
    <name evidence="6 8" type="primary">pr1</name>
</gene>
<sequence>MISDTVIAILAVALVGSTVQAAPVDATATSTSGIIAVPISKSAAQLAREADPVVSLDWLKKTKAQAQYKHKQANARLHSKRATGASVLTDQGSESLWTGPITIGGQSFTVDWDTGSSDLWVPSSACSSAACNAHHKYTLTSTGKKQSGTFSISYGDGSSASGPVYKDNVVASGLQATSQVFGAVTSESSSFSSDPSDGISGLGWPALAQLSGTSYFWSLINQGTVTSPVFSFRLATTNSELYLGGINSAHYTGAITYTPVTQKAYWTIALGGVSVNGAAINPSVSSAIIDTGTTLVYGPTAGVAALYAKIPGSASMADTYGSDYQGYYTFPCSAVPTVALTFGGSSFSVPTSAFNLGTVSSGSKQCVGGIVGQGDGSWLVGDVFLQGVYSIYDVGNARVGFAKTV</sequence>